<dbReference type="EMBL" id="CM000126">
    <property type="protein sequence ID" value="EEC71409.1"/>
    <property type="molecule type" value="Genomic_DNA"/>
</dbReference>
<dbReference type="STRING" id="39946.B8A927"/>
<dbReference type="EnsemblPlants" id="BGIOSGA004378-TA">
    <property type="protein sequence ID" value="BGIOSGA004378-PA"/>
    <property type="gene ID" value="BGIOSGA004378"/>
</dbReference>
<dbReference type="EnsemblPlants" id="OsGoSa_01g0031220.01">
    <property type="protein sequence ID" value="OsGoSa_01g0031220.01"/>
    <property type="gene ID" value="OsGoSa_01g0031220"/>
</dbReference>
<dbReference type="EnsemblPlants" id="OsIR64_01g0030750.01">
    <property type="protein sequence ID" value="OsIR64_01g0030750.01"/>
    <property type="gene ID" value="OsIR64_01g0030750"/>
</dbReference>
<dbReference type="EnsemblPlants" id="OsKYG_01g0031020.01">
    <property type="protein sequence ID" value="OsKYG_01g0031020.01"/>
    <property type="gene ID" value="OsKYG_01g0031020"/>
</dbReference>
<dbReference type="EnsemblPlants" id="OsLaMu_01g0031170.01">
    <property type="protein sequence ID" value="OsLaMu_01g0031170.01"/>
    <property type="gene ID" value="OsLaMu_01g0031170"/>
</dbReference>
<dbReference type="EnsemblPlants" id="OsPr106_01g0031020.01">
    <property type="protein sequence ID" value="OsPr106_01g0031020.01"/>
    <property type="gene ID" value="OsPr106_01g0031020"/>
</dbReference>
<dbReference type="EnsemblPlants" id="OsZS97_01G031150_03">
    <property type="protein sequence ID" value="OsZS97_01G031150_03"/>
    <property type="gene ID" value="OsZS97_01G031150"/>
</dbReference>
<dbReference type="Gramene" id="BGIOSGA004378-TA">
    <property type="protein sequence ID" value="BGIOSGA004378-PA"/>
    <property type="gene ID" value="BGIOSGA004378"/>
</dbReference>
<dbReference type="Gramene" id="OsGoSa_01g0031220.01">
    <property type="protein sequence ID" value="OsGoSa_01g0031220.01"/>
    <property type="gene ID" value="OsGoSa_01g0031220"/>
</dbReference>
<dbReference type="Gramene" id="OsIR64_01g0030750.01">
    <property type="protein sequence ID" value="OsIR64_01g0030750.01"/>
    <property type="gene ID" value="OsIR64_01g0030750"/>
</dbReference>
<dbReference type="Gramene" id="OsKYG_01g0031020.01">
    <property type="protein sequence ID" value="OsKYG_01g0031020.01"/>
    <property type="gene ID" value="OsKYG_01g0031020"/>
</dbReference>
<dbReference type="Gramene" id="OsLaMu_01g0031170.01">
    <property type="protein sequence ID" value="OsLaMu_01g0031170.01"/>
    <property type="gene ID" value="OsLaMu_01g0031170"/>
</dbReference>
<dbReference type="Gramene" id="OsPr106_01g0031020.01">
    <property type="protein sequence ID" value="OsPr106_01g0031020.01"/>
    <property type="gene ID" value="OsPr106_01g0031020"/>
</dbReference>
<dbReference type="Gramene" id="OsZS97_01G031150_03">
    <property type="protein sequence ID" value="OsZS97_01G031150_03"/>
    <property type="gene ID" value="OsZS97_01G031150"/>
</dbReference>
<dbReference type="HOGENOM" id="CLU_114729_1_0_1"/>
<dbReference type="OMA" id="CKPLHKF"/>
<dbReference type="OrthoDB" id="1918787at2759"/>
<dbReference type="Proteomes" id="UP000007015">
    <property type="component" value="Chromosome 1"/>
</dbReference>
<dbReference type="GO" id="GO:0005886">
    <property type="term" value="C:plasma membrane"/>
    <property type="evidence" value="ECO:0007669"/>
    <property type="project" value="UniProtKB-SubCell"/>
</dbReference>
<dbReference type="InterPro" id="IPR006459">
    <property type="entry name" value="CASP/CASPL"/>
</dbReference>
<dbReference type="InterPro" id="IPR006702">
    <property type="entry name" value="CASP_dom"/>
</dbReference>
<dbReference type="NCBIfam" id="TIGR01569">
    <property type="entry name" value="A_tha_TIGR01569"/>
    <property type="match status" value="1"/>
</dbReference>
<dbReference type="PANTHER" id="PTHR33573:SF48">
    <property type="entry name" value="CASP-LIKE PROTEIN 3A1"/>
    <property type="match status" value="1"/>
</dbReference>
<dbReference type="PANTHER" id="PTHR33573">
    <property type="entry name" value="CASP-LIKE PROTEIN 4A4"/>
    <property type="match status" value="1"/>
</dbReference>
<dbReference type="Pfam" id="PF04535">
    <property type="entry name" value="CASP_dom"/>
    <property type="match status" value="1"/>
</dbReference>
<evidence type="ECO:0000250" key="1"/>
<evidence type="ECO:0000255" key="2"/>
<evidence type="ECO:0000305" key="3"/>
<accession>B8A927</accession>
<keyword id="KW-1003">Cell membrane</keyword>
<keyword id="KW-0325">Glycoprotein</keyword>
<keyword id="KW-0472">Membrane</keyword>
<keyword id="KW-1185">Reference proteome</keyword>
<keyword id="KW-0812">Transmembrane</keyword>
<keyword id="KW-1133">Transmembrane helix</keyword>
<organism>
    <name type="scientific">Oryza sativa subsp. indica</name>
    <name type="common">Rice</name>
    <dbReference type="NCBI Taxonomy" id="39946"/>
    <lineage>
        <taxon>Eukaryota</taxon>
        <taxon>Viridiplantae</taxon>
        <taxon>Streptophyta</taxon>
        <taxon>Embryophyta</taxon>
        <taxon>Tracheophyta</taxon>
        <taxon>Spermatophyta</taxon>
        <taxon>Magnoliopsida</taxon>
        <taxon>Liliopsida</taxon>
        <taxon>Poales</taxon>
        <taxon>Poaceae</taxon>
        <taxon>BOP clade</taxon>
        <taxon>Oryzoideae</taxon>
        <taxon>Oryzeae</taxon>
        <taxon>Oryzinae</taxon>
        <taxon>Oryza</taxon>
        <taxon>Oryza sativa</taxon>
    </lineage>
</organism>
<proteinExistence type="inferred from homology"/>
<gene>
    <name type="ORF">OsI_03581</name>
</gene>
<name>CSPLC_ORYSI</name>
<feature type="chain" id="PRO_0000412028" description="CASP-like protein 3A1">
    <location>
        <begin position="1"/>
        <end position="204"/>
    </location>
</feature>
<feature type="topological domain" description="Cytoplasmic" evidence="2">
    <location>
        <begin position="1"/>
        <end position="39"/>
    </location>
</feature>
<feature type="transmembrane region" description="Helical" evidence="2">
    <location>
        <begin position="40"/>
        <end position="60"/>
    </location>
</feature>
<feature type="topological domain" description="Extracellular" evidence="2">
    <location>
        <begin position="61"/>
        <end position="88"/>
    </location>
</feature>
<feature type="transmembrane region" description="Helical" evidence="2">
    <location>
        <begin position="89"/>
        <end position="109"/>
    </location>
</feature>
<feature type="topological domain" description="Cytoplasmic" evidence="2">
    <location>
        <begin position="110"/>
        <end position="124"/>
    </location>
</feature>
<feature type="transmembrane region" description="Helical" evidence="2">
    <location>
        <begin position="125"/>
        <end position="145"/>
    </location>
</feature>
<feature type="topological domain" description="Extracellular" evidence="2">
    <location>
        <begin position="146"/>
        <end position="179"/>
    </location>
</feature>
<feature type="transmembrane region" description="Helical" evidence="2">
    <location>
        <begin position="180"/>
        <end position="200"/>
    </location>
</feature>
<feature type="topological domain" description="Cytoplasmic" evidence="2">
    <location>
        <begin position="201"/>
        <end position="204"/>
    </location>
</feature>
<feature type="glycosylation site" description="N-linked (GlcNAc...) asparagine" evidence="2">
    <location>
        <position position="80"/>
    </location>
</feature>
<feature type="glycosylation site" description="N-linked (GlcNAc...) asparagine" evidence="2">
    <location>
        <position position="153"/>
    </location>
</feature>
<sequence length="204" mass="21771">MGSIGNGRNGSEVGIQIPAMGNKEVLERPAIPRWPRLGVVMVATRAVALVMAVLSMALMISAKQRGSLKIFGIEIPLYANWSFSDSLEYLVGMSAVSAAYCLAQLLLTAHKAVKNAPVVQSRNYAWLLFTGDQIFAYAMMSAGSAAAAVANLNRTGIRHTALPNFCKPLPRFCDLSAASIACAFLSCIFLAASAVIDVIWLSNM</sequence>
<reference key="1">
    <citation type="journal article" date="2005" name="PLoS Biol.">
        <title>The genomes of Oryza sativa: a history of duplications.</title>
        <authorList>
            <person name="Yu J."/>
            <person name="Wang J."/>
            <person name="Lin W."/>
            <person name="Li S."/>
            <person name="Li H."/>
            <person name="Zhou J."/>
            <person name="Ni P."/>
            <person name="Dong W."/>
            <person name="Hu S."/>
            <person name="Zeng C."/>
            <person name="Zhang J."/>
            <person name="Zhang Y."/>
            <person name="Li R."/>
            <person name="Xu Z."/>
            <person name="Li S."/>
            <person name="Li X."/>
            <person name="Zheng H."/>
            <person name="Cong L."/>
            <person name="Lin L."/>
            <person name="Yin J."/>
            <person name="Geng J."/>
            <person name="Li G."/>
            <person name="Shi J."/>
            <person name="Liu J."/>
            <person name="Lv H."/>
            <person name="Li J."/>
            <person name="Wang J."/>
            <person name="Deng Y."/>
            <person name="Ran L."/>
            <person name="Shi X."/>
            <person name="Wang X."/>
            <person name="Wu Q."/>
            <person name="Li C."/>
            <person name="Ren X."/>
            <person name="Wang J."/>
            <person name="Wang X."/>
            <person name="Li D."/>
            <person name="Liu D."/>
            <person name="Zhang X."/>
            <person name="Ji Z."/>
            <person name="Zhao W."/>
            <person name="Sun Y."/>
            <person name="Zhang Z."/>
            <person name="Bao J."/>
            <person name="Han Y."/>
            <person name="Dong L."/>
            <person name="Ji J."/>
            <person name="Chen P."/>
            <person name="Wu S."/>
            <person name="Liu J."/>
            <person name="Xiao Y."/>
            <person name="Bu D."/>
            <person name="Tan J."/>
            <person name="Yang L."/>
            <person name="Ye C."/>
            <person name="Zhang J."/>
            <person name="Xu J."/>
            <person name="Zhou Y."/>
            <person name="Yu Y."/>
            <person name="Zhang B."/>
            <person name="Zhuang S."/>
            <person name="Wei H."/>
            <person name="Liu B."/>
            <person name="Lei M."/>
            <person name="Yu H."/>
            <person name="Li Y."/>
            <person name="Xu H."/>
            <person name="Wei S."/>
            <person name="He X."/>
            <person name="Fang L."/>
            <person name="Zhang Z."/>
            <person name="Zhang Y."/>
            <person name="Huang X."/>
            <person name="Su Z."/>
            <person name="Tong W."/>
            <person name="Li J."/>
            <person name="Tong Z."/>
            <person name="Li S."/>
            <person name="Ye J."/>
            <person name="Wang L."/>
            <person name="Fang L."/>
            <person name="Lei T."/>
            <person name="Chen C.-S."/>
            <person name="Chen H.-C."/>
            <person name="Xu Z."/>
            <person name="Li H."/>
            <person name="Huang H."/>
            <person name="Zhang F."/>
            <person name="Xu H."/>
            <person name="Li N."/>
            <person name="Zhao C."/>
            <person name="Li S."/>
            <person name="Dong L."/>
            <person name="Huang Y."/>
            <person name="Li L."/>
            <person name="Xi Y."/>
            <person name="Qi Q."/>
            <person name="Li W."/>
            <person name="Zhang B."/>
            <person name="Hu W."/>
            <person name="Zhang Y."/>
            <person name="Tian X."/>
            <person name="Jiao Y."/>
            <person name="Liang X."/>
            <person name="Jin J."/>
            <person name="Gao L."/>
            <person name="Zheng W."/>
            <person name="Hao B."/>
            <person name="Liu S.-M."/>
            <person name="Wang W."/>
            <person name="Yuan L."/>
            <person name="Cao M."/>
            <person name="McDermott J."/>
            <person name="Samudrala R."/>
            <person name="Wang J."/>
            <person name="Wong G.K.-S."/>
            <person name="Yang H."/>
        </authorList>
    </citation>
    <scope>NUCLEOTIDE SEQUENCE [LARGE SCALE GENOMIC DNA]</scope>
    <source>
        <strain>cv. 93-11</strain>
    </source>
</reference>
<reference key="2">
    <citation type="journal article" date="2014" name="Plant Physiol.">
        <title>Functional and evolutionary analysis of the CASPARIAN STRIP MEMBRANE DOMAIN PROTEIN family.</title>
        <authorList>
            <person name="Roppolo D."/>
            <person name="Boeckmann B."/>
            <person name="Pfister A."/>
            <person name="Boutet E."/>
            <person name="Rubio M.C."/>
            <person name="Denervaud-Tendon V."/>
            <person name="Vermeer J.E."/>
            <person name="Gheyselinck J."/>
            <person name="Xenarios I."/>
            <person name="Geldner N."/>
        </authorList>
    </citation>
    <scope>GENE FAMILY</scope>
    <scope>NOMENCLATURE</scope>
</reference>
<protein>
    <recommendedName>
        <fullName>CASP-like protein 3A1</fullName>
        <shortName>OsCASPL3A1</shortName>
    </recommendedName>
</protein>
<comment type="subunit">
    <text evidence="1">Homodimer and heterodimers.</text>
</comment>
<comment type="subcellular location">
    <subcellularLocation>
        <location evidence="1">Cell membrane</location>
        <topology evidence="1">Multi-pass membrane protein</topology>
    </subcellularLocation>
</comment>
<comment type="similarity">
    <text evidence="3">Belongs to the Casparian strip membrane proteins (CASP) family.</text>
</comment>